<comment type="function">
    <text evidence="6 7 8">Endo-1,4-beta-xylanase involved in the hydrolysis of xylan, a major structural heterogeneous polysaccharide found in plant biomass representing the second most abundant polysaccharide in the biosphere, after cellulose.</text>
</comment>
<comment type="catalytic activity">
    <reaction evidence="6 7 8">
        <text>Endohydrolysis of (1-&gt;4)-beta-D-xylosidic linkages in xylans.</text>
        <dbReference type="EC" id="3.2.1.8"/>
    </reaction>
</comment>
<comment type="biophysicochemical properties">
    <kinetics>
        <KM evidence="6">3.71 mg/ml for birchwood xylan</KM>
    </kinetics>
    <phDependence>
        <text evidence="6">Optimum pH is 4.5.</text>
    </phDependence>
    <temperatureDependence>
        <text evidence="6">Optimum temperature is 70 degrees Celsius.</text>
    </temperatureDependence>
</comment>
<comment type="pathway">
    <text>Glycan degradation; xylan degradation.</text>
</comment>
<comment type="subcellular location">
    <subcellularLocation>
        <location evidence="6">Secreted</location>
    </subcellularLocation>
</comment>
<comment type="similarity">
    <text evidence="9">Belongs to the glycosyl hydrolase 10 (cellulase F) family.</text>
</comment>
<gene>
    <name type="primary">xynC</name>
</gene>
<proteinExistence type="evidence at protein level"/>
<protein>
    <recommendedName>
        <fullName>Endo-1,4-beta-xylanase C</fullName>
        <shortName>Xylanase C</shortName>
        <ecNumber>3.2.1.8</ecNumber>
    </recommendedName>
    <alternativeName>
        <fullName>1,4-beta-D-xylan xylanohydrolase C</fullName>
    </alternativeName>
</protein>
<sequence length="399" mass="42340">MFKFSASLAALAALVPFVAAQSPEWGQCGGIGWTGPTTCVAGTTCVESNPYYSQCLPGAASVAPPPPSGTSSAGGSTPSSSAKLHTLAKAAGKLYFGTATDNNELTDTAYTAILDDNTMFGQITPANSMKWDATEPQQGVFTFSGGDQIATLAKTNGMLLRGHNCVWYNQLPSWVSSGSFTAAQLTSIIQNHCSTLVTHYKGQVYAWDVVNEPFNDDGTWRTDVFYNTLGTSYVQIALEAARAADPNAKLYINEYNIEFAGAKATSLLNLVKSLKAADVPLDGIGFQCHLIVGEFSGPGLQTQLSTFAAQGVEVAITELDIRMTLPSTPALLAQQQTDYNSVITACMNVESCIGVTVWDWTDKYSWVPNTFSGQGAACPWDQNFVKKPAFNGIAAGFSA</sequence>
<organism>
    <name type="scientific">Phanerodontia chrysosporium</name>
    <name type="common">White-rot fungus</name>
    <name type="synonym">Sporotrichum pruinosum</name>
    <dbReference type="NCBI Taxonomy" id="2822231"/>
    <lineage>
        <taxon>Eukaryota</taxon>
        <taxon>Fungi</taxon>
        <taxon>Dikarya</taxon>
        <taxon>Basidiomycota</taxon>
        <taxon>Agaricomycotina</taxon>
        <taxon>Agaricomycetes</taxon>
        <taxon>Polyporales</taxon>
        <taxon>Phanerochaetaceae</taxon>
        <taxon>Phanerodontia</taxon>
    </lineage>
</organism>
<dbReference type="EC" id="3.2.1.8"/>
<dbReference type="EMBL" id="EU302794">
    <property type="protein sequence ID" value="ABZ88799.1"/>
    <property type="molecule type" value="Genomic_DNA"/>
</dbReference>
<dbReference type="SMR" id="B7SIW2"/>
<dbReference type="CAZy" id="CBM1">
    <property type="family name" value="Carbohydrate-Binding Module Family 1"/>
</dbReference>
<dbReference type="CAZy" id="GH10">
    <property type="family name" value="Glycoside Hydrolase Family 10"/>
</dbReference>
<dbReference type="EnsemblFungi" id="AGR57_8937T0">
    <property type="protein sequence ID" value="AGR57_8937T0-p1"/>
    <property type="gene ID" value="AGR57_8937"/>
</dbReference>
<dbReference type="VEuPathDB" id="FungiDB:AGR57_8937"/>
<dbReference type="OMA" id="DYITTAF"/>
<dbReference type="UniPathway" id="UPA00114"/>
<dbReference type="GO" id="GO:0005576">
    <property type="term" value="C:extracellular region"/>
    <property type="evidence" value="ECO:0007669"/>
    <property type="project" value="UniProtKB-SubCell"/>
</dbReference>
<dbReference type="GO" id="GO:0030248">
    <property type="term" value="F:cellulose binding"/>
    <property type="evidence" value="ECO:0007669"/>
    <property type="project" value="InterPro"/>
</dbReference>
<dbReference type="GO" id="GO:0031176">
    <property type="term" value="F:endo-1,4-beta-xylanase activity"/>
    <property type="evidence" value="ECO:0007669"/>
    <property type="project" value="UniProtKB-EC"/>
</dbReference>
<dbReference type="GO" id="GO:0045493">
    <property type="term" value="P:xylan catabolic process"/>
    <property type="evidence" value="ECO:0007669"/>
    <property type="project" value="UniProtKB-UniPathway"/>
</dbReference>
<dbReference type="Gene3D" id="3.20.20.80">
    <property type="entry name" value="Glycosidases"/>
    <property type="match status" value="1"/>
</dbReference>
<dbReference type="InterPro" id="IPR035971">
    <property type="entry name" value="CBD_sf"/>
</dbReference>
<dbReference type="InterPro" id="IPR000254">
    <property type="entry name" value="Cellulose-bd_dom_fun"/>
</dbReference>
<dbReference type="InterPro" id="IPR044846">
    <property type="entry name" value="GH10"/>
</dbReference>
<dbReference type="InterPro" id="IPR031158">
    <property type="entry name" value="GH10_AS"/>
</dbReference>
<dbReference type="InterPro" id="IPR001000">
    <property type="entry name" value="GH10_dom"/>
</dbReference>
<dbReference type="InterPro" id="IPR017853">
    <property type="entry name" value="Glycoside_hydrolase_SF"/>
</dbReference>
<dbReference type="PANTHER" id="PTHR31490:SF35">
    <property type="entry name" value="ENDO-1,4-BETA-XYLANASE"/>
    <property type="match status" value="1"/>
</dbReference>
<dbReference type="PANTHER" id="PTHR31490">
    <property type="entry name" value="GLYCOSYL HYDROLASE"/>
    <property type="match status" value="1"/>
</dbReference>
<dbReference type="Pfam" id="PF00734">
    <property type="entry name" value="CBM_1"/>
    <property type="match status" value="1"/>
</dbReference>
<dbReference type="Pfam" id="PF00331">
    <property type="entry name" value="Glyco_hydro_10"/>
    <property type="match status" value="1"/>
</dbReference>
<dbReference type="PRINTS" id="PR00134">
    <property type="entry name" value="GLHYDRLASE10"/>
</dbReference>
<dbReference type="SMART" id="SM00236">
    <property type="entry name" value="fCBD"/>
    <property type="match status" value="1"/>
</dbReference>
<dbReference type="SMART" id="SM00633">
    <property type="entry name" value="Glyco_10"/>
    <property type="match status" value="1"/>
</dbReference>
<dbReference type="SUPFAM" id="SSF51445">
    <property type="entry name" value="(Trans)glycosidases"/>
    <property type="match status" value="1"/>
</dbReference>
<dbReference type="SUPFAM" id="SSF57180">
    <property type="entry name" value="Cellulose-binding domain"/>
    <property type="match status" value="1"/>
</dbReference>
<dbReference type="PROSITE" id="PS00562">
    <property type="entry name" value="CBM1_1"/>
    <property type="match status" value="1"/>
</dbReference>
<dbReference type="PROSITE" id="PS51164">
    <property type="entry name" value="CBM1_2"/>
    <property type="match status" value="1"/>
</dbReference>
<dbReference type="PROSITE" id="PS00591">
    <property type="entry name" value="GH10_1"/>
    <property type="match status" value="1"/>
</dbReference>
<dbReference type="PROSITE" id="PS51760">
    <property type="entry name" value="GH10_2"/>
    <property type="match status" value="1"/>
</dbReference>
<accession>B7SIW2</accession>
<reference key="1">
    <citation type="journal article" date="2004" name="Curr. Genet.">
        <title>Cloning, functional expression and characterization of three Phanerochaete chrysosporium endo-1,4-beta-xylanases.</title>
        <authorList>
            <person name="Decelle B."/>
            <person name="Tsang A."/>
            <person name="Storms R.K."/>
        </authorList>
    </citation>
    <scope>NUCLEOTIDE SEQUENCE [GENOMIC DNA]</scope>
    <scope>SUBCELLULAR LOCATION</scope>
    <scope>IDENTIFICATION BY MASS SPECTROMETRY</scope>
    <scope>FUNCTION</scope>
    <scope>CATALYTIC ACTIVITY</scope>
    <scope>BIOPHYSICOCHEMICAL PROPERTIES</scope>
    <source>
        <strain>RP78</strain>
    </source>
</reference>
<reference key="2">
    <citation type="journal article" date="1992" name="Appl. Environ. Microbiol.">
        <title>Xylanase Activity of Phanerochaete chrysosporium.</title>
        <authorList>
            <person name="Dobozi M.S."/>
            <person name="Szakacs G."/>
            <person name="Bruschi C.V."/>
        </authorList>
    </citation>
    <scope>FUNCTION</scope>
    <scope>CATALYTIC ACTIVITY</scope>
</reference>
<reference key="3">
    <citation type="journal article" date="2013" name="Bioprocess Biosyst. Eng.">
        <title>Cloning and characterization of a thermostable endo-arabinanase from Phanerochaete chrysosporium and its synergistic action with endo-xylanase.</title>
        <authorList>
            <person name="Huy N.D."/>
            <person name="Thiyagarajan S."/>
            <person name="Choi Y.E."/>
            <person name="Kim D.H."/>
            <person name="Park S.M."/>
        </authorList>
    </citation>
    <scope>FUNCTION</scope>
    <scope>CATALYTIC ACTIVITY</scope>
</reference>
<keyword id="KW-0119">Carbohydrate metabolism</keyword>
<keyword id="KW-1015">Disulfide bond</keyword>
<keyword id="KW-0326">Glycosidase</keyword>
<keyword id="KW-0378">Hydrolase</keyword>
<keyword id="KW-0624">Polysaccharide degradation</keyword>
<keyword id="KW-0964">Secreted</keyword>
<keyword id="KW-0732">Signal</keyword>
<keyword id="KW-0858">Xylan degradation</keyword>
<name>XYNC_PHACH</name>
<evidence type="ECO:0000250" key="1"/>
<evidence type="ECO:0000255" key="2"/>
<evidence type="ECO:0000255" key="3">
    <source>
        <dbReference type="PROSITE-ProRule" id="PRU00597"/>
    </source>
</evidence>
<evidence type="ECO:0000255" key="4">
    <source>
        <dbReference type="PROSITE-ProRule" id="PRU01096"/>
    </source>
</evidence>
<evidence type="ECO:0000255" key="5">
    <source>
        <dbReference type="PROSITE-ProRule" id="PRU10061"/>
    </source>
</evidence>
<evidence type="ECO:0000269" key="6">
    <source>
    </source>
</evidence>
<evidence type="ECO:0000269" key="7">
    <source>
    </source>
</evidence>
<evidence type="ECO:0000269" key="8">
    <source>
    </source>
</evidence>
<evidence type="ECO:0000305" key="9"/>
<feature type="signal peptide" evidence="2">
    <location>
        <begin position="1"/>
        <end position="20"/>
    </location>
</feature>
<feature type="chain" id="PRO_5000419221" description="Endo-1,4-beta-xylanase C">
    <location>
        <begin position="21"/>
        <end position="399"/>
    </location>
</feature>
<feature type="domain" description="CBM1" evidence="3">
    <location>
        <begin position="21"/>
        <end position="56"/>
    </location>
</feature>
<feature type="domain" description="GH10" evidence="4">
    <location>
        <begin position="81"/>
        <end position="396"/>
    </location>
</feature>
<feature type="active site" description="Proton donor" evidence="1">
    <location>
        <position position="212"/>
    </location>
</feature>
<feature type="active site" description="Nucleophile" evidence="5">
    <location>
        <position position="318"/>
    </location>
</feature>
<feature type="disulfide bond" evidence="1">
    <location>
        <begin position="346"/>
        <end position="352"/>
    </location>
</feature>